<feature type="chain" id="PRO_0000064818" description="BAR/IMD domain-containing adapter protein 2">
    <location>
        <begin position="1"/>
        <end position="535"/>
    </location>
</feature>
<feature type="domain" description="IMD" evidence="5">
    <location>
        <begin position="1"/>
        <end position="250"/>
    </location>
</feature>
<feature type="domain" description="SH3" evidence="4">
    <location>
        <begin position="375"/>
        <end position="438"/>
    </location>
</feature>
<feature type="region of interest" description="Disordered" evidence="6">
    <location>
        <begin position="308"/>
        <end position="370"/>
    </location>
</feature>
<feature type="region of interest" description="Disordered" evidence="6">
    <location>
        <begin position="445"/>
        <end position="486"/>
    </location>
</feature>
<feature type="coiled-coil region" evidence="1">
    <location>
        <begin position="1"/>
        <end position="251"/>
    </location>
</feature>
<feature type="compositionally biased region" description="Low complexity" evidence="6">
    <location>
        <begin position="321"/>
        <end position="335"/>
    </location>
</feature>
<feature type="compositionally biased region" description="Polar residues" evidence="6">
    <location>
        <begin position="349"/>
        <end position="368"/>
    </location>
</feature>
<feature type="compositionally biased region" description="Polar residues" evidence="6">
    <location>
        <begin position="447"/>
        <end position="458"/>
    </location>
</feature>
<feature type="compositionally biased region" description="Polar residues" evidence="6">
    <location>
        <begin position="473"/>
        <end position="486"/>
    </location>
</feature>
<feature type="modified residue" description="Phosphoserine" evidence="3">
    <location>
        <position position="262"/>
    </location>
</feature>
<feature type="modified residue" description="Phosphoserine" evidence="3">
    <location>
        <position position="324"/>
    </location>
</feature>
<feature type="modified residue" description="Phosphoserine" evidence="10">
    <location>
        <position position="326"/>
    </location>
</feature>
<feature type="modified residue" description="Phosphoserine" evidence="3">
    <location>
        <position position="337"/>
    </location>
</feature>
<feature type="modified residue" description="Phosphothreonine" evidence="3">
    <location>
        <position position="341"/>
    </location>
</feature>
<feature type="modified residue" description="Phosphoserine" evidence="3">
    <location>
        <position position="347"/>
    </location>
</feature>
<feature type="modified residue" description="Phosphothreonine" evidence="3">
    <location>
        <position position="361"/>
    </location>
</feature>
<feature type="modified residue" description="Phosphoserine" evidence="10">
    <location>
        <position position="367"/>
    </location>
</feature>
<feature type="modified residue" description="Phosphoserine" evidence="3">
    <location>
        <position position="385"/>
    </location>
</feature>
<feature type="modified residue" description="Phosphoserine" evidence="2">
    <location>
        <position position="396"/>
    </location>
</feature>
<feature type="modified residue" description="Phosphoserine" evidence="10">
    <location>
        <position position="455"/>
    </location>
</feature>
<feature type="splice variant" id="VSP_015510" description="In isoform 2." evidence="9">
    <original>RNPFANVHLKPTVTNDRSAPLLS</original>
    <variation>SGSGTLVSTV</variation>
    <location>
        <begin position="513"/>
        <end position="535"/>
    </location>
</feature>
<feature type="mutagenesis site" description="Loss of phosphorylation; when associated with F-115 and F-178." evidence="8">
    <original>Y</original>
    <variation>F</variation>
    <location>
        <position position="17"/>
    </location>
</feature>
<feature type="mutagenesis site" description="Loss of phosphorylation; when associated with F-17 and F-178." evidence="8">
    <original>Y</original>
    <variation>F</variation>
    <location>
        <position position="115"/>
    </location>
</feature>
<feature type="mutagenesis site" description="Loss of phosphorylation; when associated with F-17 and F-115." evidence="8">
    <original>Y</original>
    <variation>F</variation>
    <location>
        <position position="178"/>
    </location>
</feature>
<protein>
    <recommendedName>
        <fullName evidence="3">BAR/IMD domain-containing adapter protein 2</fullName>
    </recommendedName>
    <alternativeName>
        <fullName>Brain-specific angiogenesis inhibitor 1-associated protein 2</fullName>
        <shortName>BAI-associated protein 2</shortName>
        <shortName>BAI1-associated protein 2</shortName>
    </alternativeName>
    <alternativeName>
        <fullName>Insulin receptor substrate protein of 53 kDa</fullName>
        <shortName>IRSp53</shortName>
        <shortName>Insulin receptor substrate p53</shortName>
    </alternativeName>
    <alternativeName>
        <fullName>Insulin receptor tyrosine kinase substrate protein p53</fullName>
    </alternativeName>
</protein>
<dbReference type="EMBL" id="AY037934">
    <property type="protein sequence ID" value="AAK72488.1"/>
    <property type="molecule type" value="mRNA"/>
</dbReference>
<dbReference type="EMBL" id="BC074009">
    <property type="protein sequence ID" value="AAH74009.1"/>
    <property type="molecule type" value="mRNA"/>
</dbReference>
<dbReference type="RefSeq" id="NP_476544.1">
    <molecule id="Q6GMN2-2"/>
    <property type="nucleotide sequence ID" value="NM_057196.1"/>
</dbReference>
<dbReference type="RefSeq" id="XP_006247931.1">
    <molecule id="Q6GMN2-1"/>
    <property type="nucleotide sequence ID" value="XM_006247869.5"/>
</dbReference>
<dbReference type="SMR" id="Q6GMN2"/>
<dbReference type="BioGRID" id="250757">
    <property type="interactions" value="9"/>
</dbReference>
<dbReference type="CORUM" id="Q6GMN2"/>
<dbReference type="FunCoup" id="Q6GMN2">
    <property type="interactions" value="401"/>
</dbReference>
<dbReference type="IntAct" id="Q6GMN2">
    <property type="interactions" value="10"/>
</dbReference>
<dbReference type="MINT" id="Q6GMN2"/>
<dbReference type="STRING" id="10116.ENSRNOP00000005687"/>
<dbReference type="iPTMnet" id="Q6GMN2"/>
<dbReference type="PhosphoSitePlus" id="Q6GMN2"/>
<dbReference type="jPOST" id="Q6GMN2"/>
<dbReference type="PaxDb" id="10116-ENSRNOP00000005687"/>
<dbReference type="ABCD" id="Q6GMN2">
    <property type="antibodies" value="1 sequenced antibody"/>
</dbReference>
<dbReference type="Ensembl" id="ENSRNOT00000005687.7">
    <molecule id="Q6GMN2-1"/>
    <property type="protein sequence ID" value="ENSRNOP00000005687.6"/>
    <property type="gene ID" value="ENSRNOG00000004049.8"/>
</dbReference>
<dbReference type="Ensembl" id="ENSRNOT00000068437.5">
    <molecule id="Q6GMN2-2"/>
    <property type="protein sequence ID" value="ENSRNOP00000060172.3"/>
    <property type="gene ID" value="ENSRNOG00000004049.8"/>
</dbReference>
<dbReference type="GeneID" id="117542"/>
<dbReference type="KEGG" id="rno:117542"/>
<dbReference type="AGR" id="RGD:619814"/>
<dbReference type="CTD" id="10458"/>
<dbReference type="RGD" id="619814">
    <property type="gene designation" value="Baiap2"/>
</dbReference>
<dbReference type="eggNOG" id="ENOG502QUM6">
    <property type="taxonomic scope" value="Eukaryota"/>
</dbReference>
<dbReference type="GeneTree" id="ENSGT00940000153560"/>
<dbReference type="HOGENOM" id="CLU_025877_0_1_1"/>
<dbReference type="InParanoid" id="Q6GMN2"/>
<dbReference type="OMA" id="FSHQAKG"/>
<dbReference type="OrthoDB" id="3800937at2759"/>
<dbReference type="PhylomeDB" id="Q6GMN2"/>
<dbReference type="Reactome" id="R-RNO-2029482">
    <property type="pathway name" value="Regulation of actin dynamics for phagocytic cup formation"/>
</dbReference>
<dbReference type="Reactome" id="R-RNO-4420097">
    <property type="pathway name" value="VEGFA-VEGFR2 Pathway"/>
</dbReference>
<dbReference type="Reactome" id="R-RNO-5663213">
    <property type="pathway name" value="RHO GTPases Activate WASPs and WAVEs"/>
</dbReference>
<dbReference type="Reactome" id="R-RNO-9013149">
    <property type="pathway name" value="RAC1 GTPase cycle"/>
</dbReference>
<dbReference type="PRO" id="PR:Q6GMN2"/>
<dbReference type="Proteomes" id="UP000002494">
    <property type="component" value="Chromosome 10"/>
</dbReference>
<dbReference type="Bgee" id="ENSRNOG00000004049">
    <property type="expression patterns" value="Expressed in frontal cortex and 19 other cell types or tissues"/>
</dbReference>
<dbReference type="GO" id="GO:0015629">
    <property type="term" value="C:actin cytoskeleton"/>
    <property type="evidence" value="ECO:0000266"/>
    <property type="project" value="RGD"/>
</dbReference>
<dbReference type="GO" id="GO:0005829">
    <property type="term" value="C:cytosol"/>
    <property type="evidence" value="ECO:0000250"/>
    <property type="project" value="UniProtKB"/>
</dbReference>
<dbReference type="GO" id="GO:0043198">
    <property type="term" value="C:dendritic shaft"/>
    <property type="evidence" value="ECO:0000314"/>
    <property type="project" value="RGD"/>
</dbReference>
<dbReference type="GO" id="GO:0043197">
    <property type="term" value="C:dendritic spine"/>
    <property type="evidence" value="ECO:0000314"/>
    <property type="project" value="RGD"/>
</dbReference>
<dbReference type="GO" id="GO:0061846">
    <property type="term" value="C:dendritic spine cytoplasm"/>
    <property type="evidence" value="ECO:0000314"/>
    <property type="project" value="RGD"/>
</dbReference>
<dbReference type="GO" id="GO:0060076">
    <property type="term" value="C:excitatory synapse"/>
    <property type="evidence" value="ECO:0000314"/>
    <property type="project" value="RGD"/>
</dbReference>
<dbReference type="GO" id="GO:0030175">
    <property type="term" value="C:filopodium"/>
    <property type="evidence" value="ECO:0007669"/>
    <property type="project" value="UniProtKB-SubCell"/>
</dbReference>
<dbReference type="GO" id="GO:0098978">
    <property type="term" value="C:glutamatergic synapse"/>
    <property type="evidence" value="ECO:0000314"/>
    <property type="project" value="SynGO"/>
</dbReference>
<dbReference type="GO" id="GO:0030027">
    <property type="term" value="C:lamellipodium"/>
    <property type="evidence" value="ECO:0000314"/>
    <property type="project" value="ARUK-UCL"/>
</dbReference>
<dbReference type="GO" id="GO:0005874">
    <property type="term" value="C:microtubule"/>
    <property type="evidence" value="ECO:0000314"/>
    <property type="project" value="RGD"/>
</dbReference>
<dbReference type="GO" id="GO:0043005">
    <property type="term" value="C:neuron projection"/>
    <property type="evidence" value="ECO:0000266"/>
    <property type="project" value="RGD"/>
</dbReference>
<dbReference type="GO" id="GO:0061845">
    <property type="term" value="C:neuron projection branch point"/>
    <property type="evidence" value="ECO:0000314"/>
    <property type="project" value="RGD"/>
</dbReference>
<dbReference type="GO" id="GO:0044306">
    <property type="term" value="C:neuron projection terminus"/>
    <property type="evidence" value="ECO:0000314"/>
    <property type="project" value="RGD"/>
</dbReference>
<dbReference type="GO" id="GO:0043025">
    <property type="term" value="C:neuronal cell body"/>
    <property type="evidence" value="ECO:0000314"/>
    <property type="project" value="RGD"/>
</dbReference>
<dbReference type="GO" id="GO:0005654">
    <property type="term" value="C:nucleoplasm"/>
    <property type="evidence" value="ECO:0000318"/>
    <property type="project" value="GO_Central"/>
</dbReference>
<dbReference type="GO" id="GO:0098794">
    <property type="term" value="C:postsynapse"/>
    <property type="evidence" value="ECO:0000314"/>
    <property type="project" value="RGD"/>
</dbReference>
<dbReference type="GO" id="GO:0099524">
    <property type="term" value="C:postsynaptic cytosol"/>
    <property type="evidence" value="ECO:0000314"/>
    <property type="project" value="SynGO"/>
</dbReference>
<dbReference type="GO" id="GO:0014069">
    <property type="term" value="C:postsynaptic density"/>
    <property type="evidence" value="ECO:0000314"/>
    <property type="project" value="SynGO"/>
</dbReference>
<dbReference type="GO" id="GO:0099092">
    <property type="term" value="C:postsynaptic density, intracellular component"/>
    <property type="evidence" value="ECO:0000314"/>
    <property type="project" value="SynGO"/>
</dbReference>
<dbReference type="GO" id="GO:0098793">
    <property type="term" value="C:presynapse"/>
    <property type="evidence" value="ECO:0000314"/>
    <property type="project" value="RGD"/>
</dbReference>
<dbReference type="GO" id="GO:0099523">
    <property type="term" value="C:presynaptic cytosol"/>
    <property type="evidence" value="ECO:0000314"/>
    <property type="project" value="SynGO"/>
</dbReference>
<dbReference type="GO" id="GO:0001726">
    <property type="term" value="C:ruffle"/>
    <property type="evidence" value="ECO:0007669"/>
    <property type="project" value="UniProtKB-SubCell"/>
</dbReference>
<dbReference type="GO" id="GO:0098685">
    <property type="term" value="C:Schaffer collateral - CA1 synapse"/>
    <property type="evidence" value="ECO:0000266"/>
    <property type="project" value="RGD"/>
</dbReference>
<dbReference type="GO" id="GO:0030141">
    <property type="term" value="C:secretory granule"/>
    <property type="evidence" value="ECO:0000314"/>
    <property type="project" value="RGD"/>
</dbReference>
<dbReference type="GO" id="GO:0097060">
    <property type="term" value="C:synaptic membrane"/>
    <property type="evidence" value="ECO:0000314"/>
    <property type="project" value="RGD"/>
</dbReference>
<dbReference type="GO" id="GO:0008093">
    <property type="term" value="F:cytoskeletal anchor activity"/>
    <property type="evidence" value="ECO:0007669"/>
    <property type="project" value="InterPro"/>
</dbReference>
<dbReference type="GO" id="GO:0042802">
    <property type="term" value="F:identical protein binding"/>
    <property type="evidence" value="ECO:0000266"/>
    <property type="project" value="RGD"/>
</dbReference>
<dbReference type="GO" id="GO:0030165">
    <property type="term" value="F:PDZ domain binding"/>
    <property type="evidence" value="ECO:0000314"/>
    <property type="project" value="RGD"/>
</dbReference>
<dbReference type="GO" id="GO:0070064">
    <property type="term" value="F:proline-rich region binding"/>
    <property type="evidence" value="ECO:0000250"/>
    <property type="project" value="UniProtKB"/>
</dbReference>
<dbReference type="GO" id="GO:0097110">
    <property type="term" value="F:scaffold protein binding"/>
    <property type="evidence" value="ECO:0000353"/>
    <property type="project" value="RGD"/>
</dbReference>
<dbReference type="GO" id="GO:0001221">
    <property type="term" value="F:transcription coregulator binding"/>
    <property type="evidence" value="ECO:0000353"/>
    <property type="project" value="RGD"/>
</dbReference>
<dbReference type="GO" id="GO:0051764">
    <property type="term" value="P:actin crosslink formation"/>
    <property type="evidence" value="ECO:0000250"/>
    <property type="project" value="UniProtKB"/>
</dbReference>
<dbReference type="GO" id="GO:0051017">
    <property type="term" value="P:actin filament bundle assembly"/>
    <property type="evidence" value="ECO:0000250"/>
    <property type="project" value="UniProtKB"/>
</dbReference>
<dbReference type="GO" id="GO:0071364">
    <property type="term" value="P:cellular response to epidermal growth factor stimulus"/>
    <property type="evidence" value="ECO:0000270"/>
    <property type="project" value="RGD"/>
</dbReference>
<dbReference type="GO" id="GO:1905232">
    <property type="term" value="P:cellular response to L-glutamate"/>
    <property type="evidence" value="ECO:0000270"/>
    <property type="project" value="RGD"/>
</dbReference>
<dbReference type="GO" id="GO:0016358">
    <property type="term" value="P:dendrite development"/>
    <property type="evidence" value="ECO:0000266"/>
    <property type="project" value="RGD"/>
</dbReference>
<dbReference type="GO" id="GO:0050804">
    <property type="term" value="P:modulation of chemical synaptic transmission"/>
    <property type="evidence" value="ECO:0000266"/>
    <property type="project" value="RGD"/>
</dbReference>
<dbReference type="GO" id="GO:0030182">
    <property type="term" value="P:neuron differentiation"/>
    <property type="evidence" value="ECO:0000270"/>
    <property type="project" value="RGD"/>
</dbReference>
<dbReference type="GO" id="GO:0007009">
    <property type="term" value="P:plasma membrane organization"/>
    <property type="evidence" value="ECO:0007669"/>
    <property type="project" value="InterPro"/>
</dbReference>
<dbReference type="GO" id="GO:0030838">
    <property type="term" value="P:positive regulation of actin filament polymerization"/>
    <property type="evidence" value="ECO:0000318"/>
    <property type="project" value="GO_Central"/>
</dbReference>
<dbReference type="GO" id="GO:0061003">
    <property type="term" value="P:positive regulation of dendritic spine morphogenesis"/>
    <property type="evidence" value="ECO:0000315"/>
    <property type="project" value="RGD"/>
</dbReference>
<dbReference type="GO" id="GO:2000463">
    <property type="term" value="P:positive regulation of excitatory postsynaptic potential"/>
    <property type="evidence" value="ECO:0000315"/>
    <property type="project" value="RGD"/>
</dbReference>
<dbReference type="GO" id="GO:0010976">
    <property type="term" value="P:positive regulation of neuron projection development"/>
    <property type="evidence" value="ECO:0000315"/>
    <property type="project" value="RGD"/>
</dbReference>
<dbReference type="GO" id="GO:0035418">
    <property type="term" value="P:protein localization to synapse"/>
    <property type="evidence" value="ECO:0000315"/>
    <property type="project" value="RGD"/>
</dbReference>
<dbReference type="GO" id="GO:0032956">
    <property type="term" value="P:regulation of actin cytoskeleton organization"/>
    <property type="evidence" value="ECO:0000250"/>
    <property type="project" value="UniProtKB"/>
</dbReference>
<dbReference type="GO" id="GO:0008360">
    <property type="term" value="P:regulation of cell shape"/>
    <property type="evidence" value="ECO:0000250"/>
    <property type="project" value="UniProtKB"/>
</dbReference>
<dbReference type="GO" id="GO:1905274">
    <property type="term" value="P:regulation of modification of postsynaptic actin cytoskeleton"/>
    <property type="evidence" value="ECO:0000314"/>
    <property type="project" value="SynGO"/>
</dbReference>
<dbReference type="GO" id="GO:0099175">
    <property type="term" value="P:regulation of postsynapse organization"/>
    <property type="evidence" value="ECO:0000314"/>
    <property type="project" value="SynGO"/>
</dbReference>
<dbReference type="GO" id="GO:0048167">
    <property type="term" value="P:regulation of synaptic plasticity"/>
    <property type="evidence" value="ECO:0000266"/>
    <property type="project" value="RGD"/>
</dbReference>
<dbReference type="CDD" id="cd07646">
    <property type="entry name" value="I-BAR_IMD_IRSp53"/>
    <property type="match status" value="1"/>
</dbReference>
<dbReference type="CDD" id="cd11915">
    <property type="entry name" value="SH3_Irsp53"/>
    <property type="match status" value="1"/>
</dbReference>
<dbReference type="FunFam" id="1.20.1270.60:FF:000011">
    <property type="entry name" value="Brain-specific angiogenesis inhibitor 1-associated protein 2"/>
    <property type="match status" value="1"/>
</dbReference>
<dbReference type="FunFam" id="2.30.30.40:FF:000018">
    <property type="entry name" value="Brain-specific angiogenesis inhibitor 1-associated protein 2"/>
    <property type="match status" value="1"/>
</dbReference>
<dbReference type="Gene3D" id="1.20.1270.60">
    <property type="entry name" value="Arfaptin homology (AH) domain/BAR domain"/>
    <property type="match status" value="1"/>
</dbReference>
<dbReference type="Gene3D" id="2.30.30.40">
    <property type="entry name" value="SH3 Domains"/>
    <property type="match status" value="1"/>
</dbReference>
<dbReference type="InterPro" id="IPR027267">
    <property type="entry name" value="AH/BAR_dom_sf"/>
</dbReference>
<dbReference type="InterPro" id="IPR030128">
    <property type="entry name" value="BAIP2_I-BAR_dom"/>
</dbReference>
<dbReference type="InterPro" id="IPR035594">
    <property type="entry name" value="BAIP2_SH3"/>
</dbReference>
<dbReference type="InterPro" id="IPR013606">
    <property type="entry name" value="I-BAR_dom"/>
</dbReference>
<dbReference type="InterPro" id="IPR027681">
    <property type="entry name" value="IRSp53/IRTKS/Pinkbar"/>
</dbReference>
<dbReference type="InterPro" id="IPR036028">
    <property type="entry name" value="SH3-like_dom_sf"/>
</dbReference>
<dbReference type="InterPro" id="IPR001452">
    <property type="entry name" value="SH3_domain"/>
</dbReference>
<dbReference type="PANTHER" id="PTHR14206">
    <property type="entry name" value="BRAIN-SPECIFIC ANGIOGENESIS INHIBITOR 1-ASSOCIATED PROTEIN 2"/>
    <property type="match status" value="1"/>
</dbReference>
<dbReference type="PANTHER" id="PTHR14206:SF3">
    <property type="entry name" value="BRAIN-SPECIFIC ANGIOGENESIS INHIBITOR 1-ASSOCIATED PROTEIN 2"/>
    <property type="match status" value="1"/>
</dbReference>
<dbReference type="Pfam" id="PF08397">
    <property type="entry name" value="IMD"/>
    <property type="match status" value="1"/>
</dbReference>
<dbReference type="Pfam" id="PF07653">
    <property type="entry name" value="SH3_2"/>
    <property type="match status" value="1"/>
</dbReference>
<dbReference type="SMART" id="SM00326">
    <property type="entry name" value="SH3"/>
    <property type="match status" value="1"/>
</dbReference>
<dbReference type="SUPFAM" id="SSF103657">
    <property type="entry name" value="BAR/IMD domain-like"/>
    <property type="match status" value="1"/>
</dbReference>
<dbReference type="SUPFAM" id="SSF50044">
    <property type="entry name" value="SH3-domain"/>
    <property type="match status" value="1"/>
</dbReference>
<dbReference type="PROSITE" id="PS51338">
    <property type="entry name" value="IMD"/>
    <property type="match status" value="1"/>
</dbReference>
<dbReference type="PROSITE" id="PS50002">
    <property type="entry name" value="SH3"/>
    <property type="match status" value="1"/>
</dbReference>
<organism>
    <name type="scientific">Rattus norvegicus</name>
    <name type="common">Rat</name>
    <dbReference type="NCBI Taxonomy" id="10116"/>
    <lineage>
        <taxon>Eukaryota</taxon>
        <taxon>Metazoa</taxon>
        <taxon>Chordata</taxon>
        <taxon>Craniata</taxon>
        <taxon>Vertebrata</taxon>
        <taxon>Euteleostomi</taxon>
        <taxon>Mammalia</taxon>
        <taxon>Eutheria</taxon>
        <taxon>Euarchontoglires</taxon>
        <taxon>Glires</taxon>
        <taxon>Rodentia</taxon>
        <taxon>Myomorpha</taxon>
        <taxon>Muroidea</taxon>
        <taxon>Muridae</taxon>
        <taxon>Murinae</taxon>
        <taxon>Rattus</taxon>
    </lineage>
</organism>
<proteinExistence type="evidence at protein level"/>
<reference key="1">
    <citation type="journal article" date="2001" name="Neurosci. Lett.">
        <title>Insulin receptor substrate protein p53 localization in rats suggests mechanism for specific polyglutamine neurodegeneration.</title>
        <authorList>
            <person name="Thomas E.A."/>
            <person name="Foye P.E."/>
            <person name="Alvarez C.E."/>
            <person name="Usui H."/>
            <person name="Sutcliffe J.G."/>
        </authorList>
    </citation>
    <scope>NUCLEOTIDE SEQUENCE [MRNA] (ISOFORM 2)</scope>
    <scope>TISSUE SPECIFICITY</scope>
    <source>
        <strain>Sprague-Dawley</strain>
    </source>
</reference>
<reference key="2">
    <citation type="journal article" date="2004" name="Genome Res.">
        <title>The status, quality, and expansion of the NIH full-length cDNA project: the Mammalian Gene Collection (MGC).</title>
        <authorList>
            <consortium name="The MGC Project Team"/>
        </authorList>
    </citation>
    <scope>NUCLEOTIDE SEQUENCE [LARGE SCALE MRNA] (ISOFORM 1)</scope>
    <source>
        <tissue>Lung</tissue>
    </source>
</reference>
<reference key="3">
    <citation type="submission" date="2007-04" db="UniProtKB">
        <authorList>
            <person name="Lubec G."/>
            <person name="Chen W.-Q."/>
        </authorList>
    </citation>
    <scope>PROTEIN SEQUENCE OF 12-18 AND 41-50</scope>
    <scope>IDENTIFICATION BY MASS SPECTROMETRY</scope>
    <source>
        <strain>Sprague-Dawley</strain>
        <tissue>Hippocampus</tissue>
    </source>
</reference>
<reference key="4">
    <citation type="journal article" date="2001" name="Biochem. Biophys. Res. Commun.">
        <title>Distinctive tissue distribution and phosphorylation of IRSp53 isoforms.</title>
        <authorList>
            <person name="Okamura-Oho Y."/>
            <person name="Miyashita T."/>
            <person name="Yamada M."/>
        </authorList>
    </citation>
    <scope>PHOSPHORYLATION</scope>
    <scope>MUTAGENESIS OF TYR-17; TYR-115 AND TYR-178</scope>
    <scope>ALTERNATIVE SPLICING</scope>
    <scope>TISSUE SPECIFICITY</scope>
</reference>
<reference key="5">
    <citation type="journal article" date="2005" name="Mol. Cell. Biol.">
        <title>Tiam1-IRSp53 complex formation directs specificity of rac-mediated actin cytoskeleton regulation.</title>
        <authorList>
            <person name="Connolly B.A."/>
            <person name="Rice J."/>
            <person name="Feig L.A."/>
            <person name="Buchsbaum R.J."/>
        </authorList>
    </citation>
    <scope>INTERACTION WITH TIAM1</scope>
</reference>
<reference key="6">
    <citation type="journal article" date="2012" name="Nat. Commun.">
        <title>Quantitative maps of protein phosphorylation sites across 14 different rat organs and tissues.</title>
        <authorList>
            <person name="Lundby A."/>
            <person name="Secher A."/>
            <person name="Lage K."/>
            <person name="Nordsborg N.B."/>
            <person name="Dmytriyev A."/>
            <person name="Lundby C."/>
            <person name="Olsen J.V."/>
        </authorList>
    </citation>
    <scope>PHOSPHORYLATION [LARGE SCALE ANALYSIS] AT SER-326; SER-367 AND SER-455</scope>
    <scope>IDENTIFICATION BY MASS SPECTROMETRY [LARGE SCALE ANALYSIS]</scope>
</reference>
<sequence length="535" mass="59183">MSLSRSEEMHRLTENVYKTIMEQFNPSLRNFIAMGKNYEKALAGVTFAAKGYFDALVKMGELASESQGSKELGDVLFQMAEVHRQIQNQLEEMLKAFHNELLTQLEQKVELDSRYLSAALKKYQTEQRSKGDALDKCQAELKKLRKKSQGSKNPQKYSDKELQYIDAISNKQGELENYVSDGYKTALTEERRRFCFLVEKQCAVAKNSAAYHSKGKELLAQKLPLWQQACADPNKIPDRAAQLMQQMANSNGSILPSALSASKSNLVISDPIPGAKPLPVPPELAPFVGRMSAQENVPVMNGVAGADSEDYNPWADRKAAQPKSLSPPQSQSKLSDSYSNTLPVRKSVTPKNSYATTENKTLPRSSSMAAGLERNGRMRVKAIFSHAAGDNSTLLSFKEGDLITLLVPEARDGWHYGESEKTKMRGWFPFSYTRVLDSDGSDRLHMSLQQGKSSSTGNLLDKDDLALPPPDYGTSSRAFPSQTAGTFKQRPYSVAVPAFSQGLDDYGARSVSRNPFANVHLKPTVTNDRSAPLLS</sequence>
<gene>
    <name type="primary">Baiap2</name>
</gene>
<evidence type="ECO:0000250" key="1"/>
<evidence type="ECO:0000250" key="2">
    <source>
        <dbReference type="UniProtKB" id="Q8BKX1"/>
    </source>
</evidence>
<evidence type="ECO:0000250" key="3">
    <source>
        <dbReference type="UniProtKB" id="Q9UQB8"/>
    </source>
</evidence>
<evidence type="ECO:0000255" key="4">
    <source>
        <dbReference type="PROSITE-ProRule" id="PRU00192"/>
    </source>
</evidence>
<evidence type="ECO:0000255" key="5">
    <source>
        <dbReference type="PROSITE-ProRule" id="PRU00668"/>
    </source>
</evidence>
<evidence type="ECO:0000256" key="6">
    <source>
        <dbReference type="SAM" id="MobiDB-lite"/>
    </source>
</evidence>
<evidence type="ECO:0000269" key="7">
    <source>
    </source>
</evidence>
<evidence type="ECO:0000269" key="8">
    <source>
    </source>
</evidence>
<evidence type="ECO:0000303" key="9">
    <source>
    </source>
</evidence>
<evidence type="ECO:0007744" key="10">
    <source>
    </source>
</evidence>
<keyword id="KW-0025">Alternative splicing</keyword>
<keyword id="KW-0966">Cell projection</keyword>
<keyword id="KW-0175">Coiled coil</keyword>
<keyword id="KW-0963">Cytoplasm</keyword>
<keyword id="KW-0206">Cytoskeleton</keyword>
<keyword id="KW-0903">Direct protein sequencing</keyword>
<keyword id="KW-0472">Membrane</keyword>
<keyword id="KW-0597">Phosphoprotein</keyword>
<keyword id="KW-1185">Reference proteome</keyword>
<keyword id="KW-0728">SH3 domain</keyword>
<name>BAIP2_RAT</name>
<comment type="function">
    <text evidence="1">Adapter protein that links membrane-bound small G-proteins to cytoplasmic effector proteins. Necessary for CDC42-mediated reorganization of the actin cytoskeleton and for RAC1-mediated membrane ruffling. Involved in the regulation of the actin cytoskeleton by WASF family members and the Arp2/3 complex. Plays a role in neurite growth. Acts syngeristically with ENAH to promote filipodia formation. Plays a role in the reorganization of the actin cytoskeleton in response to bacterial infection. Participates in actin bundling when associated with EPS8, promoting filopodial protrusions (By similarity).</text>
</comment>
<comment type="subunit">
    <text evidence="1">Homodimer. Interacts with CDC42 and RAC1 that have been activated by GTP binding. Binds TIAM1. Interacts with ATN1, ADGRB1, DIAPH1, EPS8, SHANK1, SHANK2, SHANK3, WASF1 and WASF2. Interacts with ENAH after recruitment of CDC42 (By similarity).</text>
</comment>
<comment type="interaction">
    <interactant intactId="EBI-6997402">
        <id>Q6GMN2</id>
    </interactant>
    <interactant intactId="EBI-7001699">
        <id>Q9Z252</id>
        <label>Lin7b</label>
    </interactant>
    <organismsDiffer>false</organismsDiffer>
    <experiments>3</experiments>
</comment>
<comment type="subcellular location">
    <subcellularLocation>
        <location evidence="1">Cytoplasm</location>
    </subcellularLocation>
    <subcellularLocation>
        <location evidence="1">Membrane</location>
        <topology evidence="1">Peripheral membrane protein</topology>
    </subcellularLocation>
    <subcellularLocation>
        <location evidence="1">Cell projection</location>
        <location evidence="1">Filopodium</location>
    </subcellularLocation>
    <subcellularLocation>
        <location evidence="1">Cell projection</location>
        <location evidence="1">Ruffle</location>
    </subcellularLocation>
    <subcellularLocation>
        <location evidence="1">Cytoplasm</location>
        <location evidence="1">Cytoskeleton</location>
    </subcellularLocation>
    <text evidence="1">Detected throughout the cytoplasm in the absence of specific binding partners. Detected in filopodia and close to membrane ruffles. Recruited to actin pedestals that are formed upon infection by bacteria at bacterial attachment sites (By similarity).</text>
</comment>
<comment type="alternative products">
    <event type="alternative splicing"/>
    <isoform>
        <id>Q6GMN2-1</id>
        <name>1</name>
        <name>IRS-58</name>
        <sequence type="displayed"/>
    </isoform>
    <isoform>
        <id>Q6GMN2-2</id>
        <name>2</name>
        <name>IRSp53S</name>
        <name>BAIAP2-alpha</name>
        <sequence type="described" ref="VSP_015510"/>
    </isoform>
</comment>
<comment type="tissue specificity">
    <text evidence="7 8">Ubiquitous.</text>
</comment>
<comment type="domain">
    <text evidence="1">The IMD domain forms a coiled coil. The isolated domain can induce actin bundling and filopodia formation. In the absence of G-proteins intramolecular interaction between the IMD and the SH3 domain gives rise to an auto-inhibited state of the protein. Interaction of the IMD with RAC1 or CDC42 leads to activation (By similarity).</text>
</comment>
<comment type="domain">
    <text evidence="1">The SH3 domain interacts with ATN1, ADGRB1, WASF1, WASF2, SHANK1, DIAPH1 and ENAH.</text>
</comment>
<comment type="PTM">
    <text evidence="8">Phosphorylated on tyrosine residues by INSR in response to insulin treatment.</text>
</comment>
<accession>Q6GMN2</accession>
<accession>Q923H3</accession>